<reference key="1">
    <citation type="journal article" date="2008" name="J. Bacteriol.">
        <title>The complete genome sequence of Actinobacillus pleuropneumoniae L20 (serotype 5b).</title>
        <authorList>
            <person name="Foote S.J."/>
            <person name="Bosse J.T."/>
            <person name="Bouevitch A.B."/>
            <person name="Langford P.R."/>
            <person name="Young N.M."/>
            <person name="Nash J.H.E."/>
        </authorList>
    </citation>
    <scope>NUCLEOTIDE SEQUENCE [LARGE SCALE GENOMIC DNA]</scope>
    <source>
        <strain>L20</strain>
    </source>
</reference>
<accession>A3N1U6</accession>
<sequence length="317" mass="33347">MKVALLGAAGGIGQTLALLLKLRLPVGTDLALYDISPVTPGIAVDISHIPTSVSAVGYSGEDPSEALKGANLVIITAGVARKPGMTRADLFNINADIVKNLVEKVAEVCPKACIGIVTNPVNTLVPIAAEVLRKAGVYDKRKLFGVTTLDVVRAKTFTSELKEKHVETVKVPVIGGHSGPTILPLLSQALSEGLPLSFTQEEIEALTYRIQNAGTEVVEAKAGGGSATLSMAESGARFAVAVFKALLGEDCVRYAYVESKEGSGYPEFFAHPVRFGLTGVEELLPIGKLSEYEQAKLGELKPVLEADIALGKNFVNP</sequence>
<comment type="function">
    <text evidence="1">Catalyzes the reversible oxidation of malate to oxaloacetate.</text>
</comment>
<comment type="catalytic activity">
    <reaction evidence="1">
        <text>(S)-malate + NAD(+) = oxaloacetate + NADH + H(+)</text>
        <dbReference type="Rhea" id="RHEA:21432"/>
        <dbReference type="ChEBI" id="CHEBI:15378"/>
        <dbReference type="ChEBI" id="CHEBI:15589"/>
        <dbReference type="ChEBI" id="CHEBI:16452"/>
        <dbReference type="ChEBI" id="CHEBI:57540"/>
        <dbReference type="ChEBI" id="CHEBI:57945"/>
        <dbReference type="EC" id="1.1.1.37"/>
    </reaction>
</comment>
<comment type="subunit">
    <text evidence="1">Homodimer.</text>
</comment>
<comment type="similarity">
    <text evidence="1">Belongs to the LDH/MDH superfamily. MDH type 1 family.</text>
</comment>
<keyword id="KW-0520">NAD</keyword>
<keyword id="KW-0560">Oxidoreductase</keyword>
<keyword id="KW-1185">Reference proteome</keyword>
<keyword id="KW-0816">Tricarboxylic acid cycle</keyword>
<organism>
    <name type="scientific">Actinobacillus pleuropneumoniae serotype 5b (strain L20)</name>
    <dbReference type="NCBI Taxonomy" id="416269"/>
    <lineage>
        <taxon>Bacteria</taxon>
        <taxon>Pseudomonadati</taxon>
        <taxon>Pseudomonadota</taxon>
        <taxon>Gammaproteobacteria</taxon>
        <taxon>Pasteurellales</taxon>
        <taxon>Pasteurellaceae</taxon>
        <taxon>Actinobacillus</taxon>
    </lineage>
</organism>
<feature type="chain" id="PRO_0000294291" description="Malate dehydrogenase">
    <location>
        <begin position="1"/>
        <end position="317"/>
    </location>
</feature>
<feature type="active site" description="Proton acceptor" evidence="1">
    <location>
        <position position="177"/>
    </location>
</feature>
<feature type="binding site" evidence="1">
    <location>
        <begin position="7"/>
        <end position="13"/>
    </location>
    <ligand>
        <name>NAD(+)</name>
        <dbReference type="ChEBI" id="CHEBI:57540"/>
    </ligand>
</feature>
<feature type="binding site" evidence="1">
    <location>
        <position position="34"/>
    </location>
    <ligand>
        <name>NAD(+)</name>
        <dbReference type="ChEBI" id="CHEBI:57540"/>
    </ligand>
</feature>
<feature type="binding site" evidence="1">
    <location>
        <position position="81"/>
    </location>
    <ligand>
        <name>substrate</name>
    </ligand>
</feature>
<feature type="binding site" evidence="1">
    <location>
        <position position="87"/>
    </location>
    <ligand>
        <name>substrate</name>
    </ligand>
</feature>
<feature type="binding site" evidence="1">
    <location>
        <position position="94"/>
    </location>
    <ligand>
        <name>NAD(+)</name>
        <dbReference type="ChEBI" id="CHEBI:57540"/>
    </ligand>
</feature>
<feature type="binding site" evidence="1">
    <location>
        <begin position="117"/>
        <end position="119"/>
    </location>
    <ligand>
        <name>NAD(+)</name>
        <dbReference type="ChEBI" id="CHEBI:57540"/>
    </ligand>
</feature>
<feature type="binding site" evidence="1">
    <location>
        <position position="119"/>
    </location>
    <ligand>
        <name>substrate</name>
    </ligand>
</feature>
<feature type="binding site" evidence="1">
    <location>
        <position position="153"/>
    </location>
    <ligand>
        <name>substrate</name>
    </ligand>
</feature>
<feature type="binding site" evidence="1">
    <location>
        <position position="231"/>
    </location>
    <ligand>
        <name>NAD(+)</name>
        <dbReference type="ChEBI" id="CHEBI:57540"/>
    </ligand>
</feature>
<evidence type="ECO:0000255" key="1">
    <source>
        <dbReference type="HAMAP-Rule" id="MF_01516"/>
    </source>
</evidence>
<dbReference type="EC" id="1.1.1.37" evidence="1"/>
<dbReference type="EMBL" id="CP000569">
    <property type="protein sequence ID" value="ABN74382.1"/>
    <property type="molecule type" value="Genomic_DNA"/>
</dbReference>
<dbReference type="RefSeq" id="WP_009875363.1">
    <property type="nucleotide sequence ID" value="NC_009053.1"/>
</dbReference>
<dbReference type="SMR" id="A3N1U6"/>
<dbReference type="STRING" id="416269.APL_1296"/>
<dbReference type="EnsemblBacteria" id="ABN74382">
    <property type="protein sequence ID" value="ABN74382"/>
    <property type="gene ID" value="APL_1296"/>
</dbReference>
<dbReference type="KEGG" id="apl:APL_1296"/>
<dbReference type="PATRIC" id="fig|416269.6.peg.1353"/>
<dbReference type="eggNOG" id="COG0039">
    <property type="taxonomic scope" value="Bacteria"/>
</dbReference>
<dbReference type="HOGENOM" id="CLU_047181_1_0_6"/>
<dbReference type="Proteomes" id="UP000001432">
    <property type="component" value="Chromosome"/>
</dbReference>
<dbReference type="GO" id="GO:0005737">
    <property type="term" value="C:cytoplasm"/>
    <property type="evidence" value="ECO:0007669"/>
    <property type="project" value="TreeGrafter"/>
</dbReference>
<dbReference type="GO" id="GO:0030060">
    <property type="term" value="F:L-malate dehydrogenase (NAD+) activity"/>
    <property type="evidence" value="ECO:0007669"/>
    <property type="project" value="UniProtKB-UniRule"/>
</dbReference>
<dbReference type="GO" id="GO:0019752">
    <property type="term" value="P:carboxylic acid metabolic process"/>
    <property type="evidence" value="ECO:0007669"/>
    <property type="project" value="InterPro"/>
</dbReference>
<dbReference type="GO" id="GO:0006099">
    <property type="term" value="P:tricarboxylic acid cycle"/>
    <property type="evidence" value="ECO:0007669"/>
    <property type="project" value="UniProtKB-UniRule"/>
</dbReference>
<dbReference type="CDD" id="cd01337">
    <property type="entry name" value="MDH_glyoxysomal_mitochondrial"/>
    <property type="match status" value="1"/>
</dbReference>
<dbReference type="FunFam" id="3.40.50.720:FF:000017">
    <property type="entry name" value="Malate dehydrogenase"/>
    <property type="match status" value="1"/>
</dbReference>
<dbReference type="FunFam" id="3.90.110.10:FF:000001">
    <property type="entry name" value="Malate dehydrogenase"/>
    <property type="match status" value="1"/>
</dbReference>
<dbReference type="Gene3D" id="3.90.110.10">
    <property type="entry name" value="Lactate dehydrogenase/glycoside hydrolase, family 4, C-terminal"/>
    <property type="match status" value="1"/>
</dbReference>
<dbReference type="Gene3D" id="3.40.50.720">
    <property type="entry name" value="NAD(P)-binding Rossmann-like Domain"/>
    <property type="match status" value="1"/>
</dbReference>
<dbReference type="HAMAP" id="MF_01516">
    <property type="entry name" value="Malate_dehydrog_1"/>
    <property type="match status" value="1"/>
</dbReference>
<dbReference type="InterPro" id="IPR001557">
    <property type="entry name" value="L-lactate/malate_DH"/>
</dbReference>
<dbReference type="InterPro" id="IPR022383">
    <property type="entry name" value="Lactate/malate_DH_C"/>
</dbReference>
<dbReference type="InterPro" id="IPR001236">
    <property type="entry name" value="Lactate/malate_DH_N"/>
</dbReference>
<dbReference type="InterPro" id="IPR015955">
    <property type="entry name" value="Lactate_DH/Glyco_Ohase_4_C"/>
</dbReference>
<dbReference type="InterPro" id="IPR010097">
    <property type="entry name" value="Malate_DH_type1"/>
</dbReference>
<dbReference type="InterPro" id="IPR023958">
    <property type="entry name" value="Malate_DH_type1_bac"/>
</dbReference>
<dbReference type="InterPro" id="IPR036291">
    <property type="entry name" value="NAD(P)-bd_dom_sf"/>
</dbReference>
<dbReference type="NCBIfam" id="TIGR01772">
    <property type="entry name" value="MDH_euk_gproteo"/>
    <property type="match status" value="1"/>
</dbReference>
<dbReference type="PANTHER" id="PTHR11540">
    <property type="entry name" value="MALATE AND LACTATE DEHYDROGENASE"/>
    <property type="match status" value="1"/>
</dbReference>
<dbReference type="PANTHER" id="PTHR11540:SF16">
    <property type="entry name" value="MALATE DEHYDROGENASE, MITOCHONDRIAL"/>
    <property type="match status" value="1"/>
</dbReference>
<dbReference type="Pfam" id="PF02866">
    <property type="entry name" value="Ldh_1_C"/>
    <property type="match status" value="1"/>
</dbReference>
<dbReference type="Pfam" id="PF00056">
    <property type="entry name" value="Ldh_1_N"/>
    <property type="match status" value="1"/>
</dbReference>
<dbReference type="PIRSF" id="PIRSF000102">
    <property type="entry name" value="Lac_mal_DH"/>
    <property type="match status" value="1"/>
</dbReference>
<dbReference type="SUPFAM" id="SSF56327">
    <property type="entry name" value="LDH C-terminal domain-like"/>
    <property type="match status" value="1"/>
</dbReference>
<dbReference type="SUPFAM" id="SSF51735">
    <property type="entry name" value="NAD(P)-binding Rossmann-fold domains"/>
    <property type="match status" value="1"/>
</dbReference>
<name>MDH_ACTP2</name>
<protein>
    <recommendedName>
        <fullName evidence="1">Malate dehydrogenase</fullName>
        <ecNumber evidence="1">1.1.1.37</ecNumber>
    </recommendedName>
</protein>
<gene>
    <name evidence="1" type="primary">mdh</name>
    <name type="ordered locus">APL_1296</name>
</gene>
<proteinExistence type="inferred from homology"/>